<keyword id="KW-0002">3D-structure</keyword>
<keyword id="KW-1003">Cell membrane</keyword>
<keyword id="KW-0963">Cytoplasm</keyword>
<keyword id="KW-0968">Cytoplasmic vesicle</keyword>
<keyword id="KW-0206">Cytoskeleton</keyword>
<keyword id="KW-0449">Lipoprotein</keyword>
<keyword id="KW-0472">Membrane</keyword>
<keyword id="KW-0564">Palmitate</keyword>
<keyword id="KW-0597">Phosphoprotein</keyword>
<keyword id="KW-1185">Reference proteome</keyword>
<feature type="chain" id="PRO_0000094028" description="Stomatin">
    <location>
        <begin position="1"/>
        <end position="284"/>
    </location>
</feature>
<feature type="topological domain" description="Cytoplasmic" evidence="3">
    <location>
        <begin position="1"/>
        <end position="31"/>
    </location>
</feature>
<feature type="intramembrane region" evidence="3">
    <location>
        <begin position="32"/>
        <end position="52"/>
    </location>
</feature>
<feature type="topological domain" description="Cytoplasmic" evidence="3">
    <location>
        <begin position="53"/>
        <end position="284"/>
    </location>
</feature>
<feature type="region of interest" description="Required for homooligomerization" evidence="1">
    <location>
        <begin position="265"/>
        <end position="273"/>
    </location>
</feature>
<feature type="region of interest" description="Required for lipid raft association" evidence="1">
    <location>
        <begin position="267"/>
        <end position="269"/>
    </location>
</feature>
<feature type="region of interest" description="Interaction with LANCL1" evidence="1">
    <location>
        <begin position="273"/>
        <end position="284"/>
    </location>
</feature>
<feature type="modified residue" description="Phosphoserine" evidence="2">
    <location>
        <position position="18"/>
    </location>
</feature>
<feature type="modified residue" description="Phosphoserine" evidence="12 13">
    <location>
        <position position="161"/>
    </location>
</feature>
<feature type="modified residue" description="Phosphoserine" evidence="12">
    <location>
        <position position="244"/>
    </location>
</feature>
<feature type="lipid moiety-binding region" description="S-palmitoyl cysteine" evidence="1">
    <location>
        <position position="30"/>
    </location>
</feature>
<feature type="lipid moiety-binding region" description="S-palmitoyl cysteine" evidence="1">
    <location>
        <position position="87"/>
    </location>
</feature>
<feature type="mutagenesis site" description="Does not abolish interaction with ASIC3, but abolishes regulation of ASIC3 channel activity; when associated with D-109 and D-145." evidence="6">
    <original>R</original>
    <variation>D</variation>
    <location>
        <position position="97"/>
    </location>
</feature>
<feature type="mutagenesis site" description="Does not abolish interaction with ASIC3, but abolishes regulation of ASIC3 channel activity; when associated with D-97 and D-145." evidence="6">
    <original>L</original>
    <variation>D</variation>
    <location>
        <position position="109"/>
    </location>
</feature>
<feature type="mutagenesis site" description="Does not abolish interaction with ASIC3, but abolishes regulation of ASIC3 channel activity; when associated with D-97 and D-109." evidence="6">
    <original>L</original>
    <variation>D</variation>
    <location>
        <position position="145"/>
    </location>
</feature>
<feature type="mutagenesis site" description="Does not abolish interaction with ASIC3, but abolishes regulation of ASIC2 and ASIC3 channel activity." evidence="6">
    <original>T</original>
    <variation>W</variation>
    <location>
        <position position="182"/>
    </location>
</feature>
<feature type="mutagenesis site" description="Abolishes homodimerization and oligomerization. Abolishes regulation of ASIC2 and ASIC3 channel activity." evidence="6">
    <original>V</original>
    <variation>P</variation>
    <location>
        <position position="197"/>
    </location>
</feature>
<feature type="sequence conflict" description="In Ref. 4; AAC64173." evidence="10" ref="4">
    <original>D</original>
    <variation>V</variation>
    <location>
        <position position="3"/>
    </location>
</feature>
<feature type="sequence conflict" description="In Ref. 2; CAA62503." evidence="10" ref="2">
    <original>A</original>
    <variation>V</variation>
    <location>
        <position position="37"/>
    </location>
</feature>
<feature type="sequence conflict" description="In Ref. 2; CAA62503." evidence="10" ref="2">
    <original>F</original>
    <variation>I</variation>
    <location>
        <position position="40"/>
    </location>
</feature>
<feature type="sequence conflict" description="In Ref. 2; CAA62503." evidence="10" ref="2">
    <original>I</original>
    <variation>L</variation>
    <location>
        <position position="43"/>
    </location>
</feature>
<feature type="sequence conflict" description="In Ref. 2; CAA62503." evidence="10" ref="2">
    <original>L</original>
    <variation>F</variation>
    <location>
        <position position="91"/>
    </location>
</feature>
<feature type="sequence conflict" description="In Ref. 2; CAA62503." evidence="10" ref="2">
    <original>V</original>
    <variation>I</variation>
    <location>
        <position position="273"/>
    </location>
</feature>
<feature type="sequence conflict" description="In Ref. 2; CAA62503." evidence="10" ref="2">
    <original>N</original>
    <variation>H</variation>
    <location>
        <position position="283"/>
    </location>
</feature>
<feature type="strand" evidence="14">
    <location>
        <begin position="99"/>
        <end position="109"/>
    </location>
</feature>
<feature type="strand" evidence="14">
    <location>
        <begin position="115"/>
        <end position="127"/>
    </location>
</feature>
<feature type="helix" evidence="14">
    <location>
        <begin position="129"/>
        <end position="134"/>
    </location>
</feature>
<feature type="strand" evidence="14">
    <location>
        <begin position="135"/>
        <end position="137"/>
    </location>
</feature>
<feature type="helix" evidence="14">
    <location>
        <begin position="139"/>
        <end position="156"/>
    </location>
</feature>
<feature type="helix" evidence="14">
    <location>
        <begin position="160"/>
        <end position="165"/>
    </location>
</feature>
<feature type="helix" evidence="14">
    <location>
        <begin position="167"/>
        <end position="182"/>
    </location>
</feature>
<feature type="helix" evidence="14">
    <location>
        <begin position="183"/>
        <end position="185"/>
    </location>
</feature>
<feature type="strand" evidence="14">
    <location>
        <begin position="187"/>
        <end position="198"/>
    </location>
</feature>
<comment type="function">
    <text evidence="5 6">Regulates ion channel activity and transmembrane ion transport. Regulates ASIC2 and ASIC3 channel activity.</text>
</comment>
<comment type="subunit">
    <text evidence="2 5 6">Interacts with LANCL1 (By similarity). Interacts with SLC2A1 (By similarity). Interacts with SLC4A1; this interaction positively regulates SLC4A1 activity (By similarity). Identified in large complexes with SLC40A1, SLC14A1, SLC29A1 and AQP1 (By similarity). Homodimer and higher order homooligomers (By similarity). The homodimer is banana-shaped (By similarity). Interacts with ASIC1, ASIC2 and ASIC3 (PubMed:15471860, PubMed:22850675). Interacts with STOML1; may redistribute STOM from the plasma membrane to late endosomes (By similarity).</text>
</comment>
<comment type="interaction">
    <interactant intactId="EBI-8004826">
        <id>P54116</id>
    </interactant>
    <interactant intactId="EBI-8004826">
        <id>P54116</id>
        <label>Stom</label>
    </interactant>
    <organismsDiffer>false</organismsDiffer>
    <experiments>5</experiments>
</comment>
<comment type="interaction">
    <interactant intactId="EBI-8004826">
        <id>P54116</id>
    </interactant>
    <interactant intactId="EBI-982374">
        <id>O35240</id>
        <label>Asic3</label>
    </interactant>
    <organismsDiffer>true</organismsDiffer>
    <experiments>3</experiments>
</comment>
<comment type="subcellular location">
    <subcellularLocation>
        <location evidence="2">Cell membrane</location>
        <topology evidence="2">Peripheral membrane protein</topology>
        <orientation evidence="2">Cytoplasmic side</orientation>
    </subcellularLocation>
    <subcellularLocation>
        <location evidence="2">Cytoplasm</location>
        <location evidence="2">Cytoskeleton</location>
    </subcellularLocation>
    <subcellularLocation>
        <location evidence="2">Cell membrane</location>
        <topology evidence="2">Lipid-anchor</topology>
        <orientation evidence="2">Cytoplasmic side</orientation>
    </subcellularLocation>
    <subcellularLocation>
        <location evidence="2">Membrane raft</location>
    </subcellularLocation>
    <subcellularLocation>
        <location evidence="2">Melanosome</location>
    </subcellularLocation>
    <subcellularLocation>
        <location evidence="4">Cytoplasmic vesicle</location>
    </subcellularLocation>
    <text evidence="2">Localizes to juxtanuclear structure probably derived from the Golgi apparatus. Colocalizes with cortical actin microfilaments at small plasma membrane protrusions. Associates with alpha-granular lipid rafts. Translocates from the alpha-granular lipid rafts to the cell membrane on thrombin activation and selectively enriched in released microvesicles. Identified by mass spectrometry in melanosome fractions from stage I to stage IV.</text>
</comment>
<comment type="tissue specificity">
    <text evidence="4 7">Expressed in all sensory neurons of the dorsal root ganglia. In the CNS, expressed in many neurons of the spinal cord, medulla and pons. Expressed only in scattered neurons in the cortex, hippocampus, thalamus and basal ganglia. In the cerebellum, expressed in all Purkinje cells (at protein level). Widely expressed with high levels in heart, liver, skeletal muscle and testis and low levels in lung, brain and spleen.</text>
</comment>
<comment type="developmental stage">
    <text evidence="4">First expressed in the developing embryo at 11.5 dpc when target innervation is complete. Expression continues into adulthood.</text>
</comment>
<comment type="similarity">
    <text evidence="10">Belongs to the band 7/mec-2 family.</text>
</comment>
<comment type="sequence caution" evidence="10">
    <conflict type="erroneous gene model prediction">
        <sequence resource="EMBL-CDS" id="AAB18857"/>
    </conflict>
</comment>
<sequence length="284" mass="31375">MSDKRQSSHVQSQRIPESFRENSKTELGACGWILVAASFFFVIITFPISIWICIKIVKEYERVIIFRLGRILQGGAKGPGLFFILPCTDSLIKVDMRTISFDIPPQEVLTKDSVTISVDGVVYYRVQNATLAVANITNADSATRLLAQTTLRNALGTKNLSQILSDREEIAHHMQSTLDDATDDWGIKVERVEIKDVKLPVQLQRAMAAEAEAAREARAKVIAAEGEMNASRALKEASMVITESPAALQLRYLQTLTTIAAEKNSTIVFPLPVDMLQGIMGSNH</sequence>
<reference key="1">
    <citation type="journal article" date="1995" name="Blood">
        <title>cDNA structure, tissue-specific expression, and chromosomal localization of the murine band 7.2b gene.</title>
        <authorList>
            <person name="Gallagher P.G."/>
            <person name="Romana M."/>
            <person name="Lieman J.H."/>
            <person name="Ward D.C."/>
        </authorList>
    </citation>
    <scope>NUCLEOTIDE SEQUENCE [MRNA]</scope>
    <scope>TISSUE SPECIFICITY</scope>
    <source>
        <strain>C57BL/6J</strain>
    </source>
</reference>
<reference key="2">
    <citation type="journal article" date="1996" name="Gene">
        <title>Cloning and analysis of a cDNA encoding the BALB/c murine erythrocyte band 7 integral membrane protein.</title>
        <authorList>
            <person name="Schlegel W."/>
            <person name="Unfried I."/>
            <person name="Prohaska R."/>
        </authorList>
    </citation>
    <scope>NUCLEOTIDE SEQUENCE [MRNA]</scope>
    <source>
        <strain>BALB/cJ</strain>
        <tissue>Bone marrow</tissue>
    </source>
</reference>
<reference key="3">
    <citation type="journal article" date="1996" name="Genomics">
        <title>Genomic organization and 5'-flanking DNA sequence of the murine stomatin gene (Epb72).</title>
        <authorList>
            <person name="Gallagher P.G."/>
            <person name="Turetsky T."/>
            <person name="Mentzer W.C."/>
        </authorList>
    </citation>
    <scope>NUCLEOTIDE SEQUENCE [GENOMIC DNA]</scope>
</reference>
<reference key="4">
    <citation type="journal article" date="1999" name="Mol. Cell. Neurosci.">
        <title>Stomatin, a MEC-2 like protein, is expressed by mammalian sensory neurons.</title>
        <authorList>
            <person name="Mannsfeldt A.G."/>
            <person name="Carroll P."/>
            <person name="Stucky C.L."/>
            <person name="Lewin G.R."/>
        </authorList>
    </citation>
    <scope>NUCLEOTIDE SEQUENCE [MRNA]</scope>
    <scope>SUBCELLULAR LOCATION</scope>
    <scope>TISSUE SPECIFICITY</scope>
    <scope>DEVELOPMENTAL STAGE</scope>
    <source>
        <tissue>Neuron</tissue>
    </source>
</reference>
<reference key="5">
    <citation type="journal article" date="2005" name="Science">
        <title>The transcriptional landscape of the mammalian genome.</title>
        <authorList>
            <person name="Carninci P."/>
            <person name="Kasukawa T."/>
            <person name="Katayama S."/>
            <person name="Gough J."/>
            <person name="Frith M.C."/>
            <person name="Maeda N."/>
            <person name="Oyama R."/>
            <person name="Ravasi T."/>
            <person name="Lenhard B."/>
            <person name="Wells C."/>
            <person name="Kodzius R."/>
            <person name="Shimokawa K."/>
            <person name="Bajic V.B."/>
            <person name="Brenner S.E."/>
            <person name="Batalov S."/>
            <person name="Forrest A.R."/>
            <person name="Zavolan M."/>
            <person name="Davis M.J."/>
            <person name="Wilming L.G."/>
            <person name="Aidinis V."/>
            <person name="Allen J.E."/>
            <person name="Ambesi-Impiombato A."/>
            <person name="Apweiler R."/>
            <person name="Aturaliya R.N."/>
            <person name="Bailey T.L."/>
            <person name="Bansal M."/>
            <person name="Baxter L."/>
            <person name="Beisel K.W."/>
            <person name="Bersano T."/>
            <person name="Bono H."/>
            <person name="Chalk A.M."/>
            <person name="Chiu K.P."/>
            <person name="Choudhary V."/>
            <person name="Christoffels A."/>
            <person name="Clutterbuck D.R."/>
            <person name="Crowe M.L."/>
            <person name="Dalla E."/>
            <person name="Dalrymple B.P."/>
            <person name="de Bono B."/>
            <person name="Della Gatta G."/>
            <person name="di Bernardo D."/>
            <person name="Down T."/>
            <person name="Engstrom P."/>
            <person name="Fagiolini M."/>
            <person name="Faulkner G."/>
            <person name="Fletcher C.F."/>
            <person name="Fukushima T."/>
            <person name="Furuno M."/>
            <person name="Futaki S."/>
            <person name="Gariboldi M."/>
            <person name="Georgii-Hemming P."/>
            <person name="Gingeras T.R."/>
            <person name="Gojobori T."/>
            <person name="Green R.E."/>
            <person name="Gustincich S."/>
            <person name="Harbers M."/>
            <person name="Hayashi Y."/>
            <person name="Hensch T.K."/>
            <person name="Hirokawa N."/>
            <person name="Hill D."/>
            <person name="Huminiecki L."/>
            <person name="Iacono M."/>
            <person name="Ikeo K."/>
            <person name="Iwama A."/>
            <person name="Ishikawa T."/>
            <person name="Jakt M."/>
            <person name="Kanapin A."/>
            <person name="Katoh M."/>
            <person name="Kawasawa Y."/>
            <person name="Kelso J."/>
            <person name="Kitamura H."/>
            <person name="Kitano H."/>
            <person name="Kollias G."/>
            <person name="Krishnan S.P."/>
            <person name="Kruger A."/>
            <person name="Kummerfeld S.K."/>
            <person name="Kurochkin I.V."/>
            <person name="Lareau L.F."/>
            <person name="Lazarevic D."/>
            <person name="Lipovich L."/>
            <person name="Liu J."/>
            <person name="Liuni S."/>
            <person name="McWilliam S."/>
            <person name="Madan Babu M."/>
            <person name="Madera M."/>
            <person name="Marchionni L."/>
            <person name="Matsuda H."/>
            <person name="Matsuzawa S."/>
            <person name="Miki H."/>
            <person name="Mignone F."/>
            <person name="Miyake S."/>
            <person name="Morris K."/>
            <person name="Mottagui-Tabar S."/>
            <person name="Mulder N."/>
            <person name="Nakano N."/>
            <person name="Nakauchi H."/>
            <person name="Ng P."/>
            <person name="Nilsson R."/>
            <person name="Nishiguchi S."/>
            <person name="Nishikawa S."/>
            <person name="Nori F."/>
            <person name="Ohara O."/>
            <person name="Okazaki Y."/>
            <person name="Orlando V."/>
            <person name="Pang K.C."/>
            <person name="Pavan W.J."/>
            <person name="Pavesi G."/>
            <person name="Pesole G."/>
            <person name="Petrovsky N."/>
            <person name="Piazza S."/>
            <person name="Reed J."/>
            <person name="Reid J.F."/>
            <person name="Ring B.Z."/>
            <person name="Ringwald M."/>
            <person name="Rost B."/>
            <person name="Ruan Y."/>
            <person name="Salzberg S.L."/>
            <person name="Sandelin A."/>
            <person name="Schneider C."/>
            <person name="Schoenbach C."/>
            <person name="Sekiguchi K."/>
            <person name="Semple C.A."/>
            <person name="Seno S."/>
            <person name="Sessa L."/>
            <person name="Sheng Y."/>
            <person name="Shibata Y."/>
            <person name="Shimada H."/>
            <person name="Shimada K."/>
            <person name="Silva D."/>
            <person name="Sinclair B."/>
            <person name="Sperling S."/>
            <person name="Stupka E."/>
            <person name="Sugiura K."/>
            <person name="Sultana R."/>
            <person name="Takenaka Y."/>
            <person name="Taki K."/>
            <person name="Tammoja K."/>
            <person name="Tan S.L."/>
            <person name="Tang S."/>
            <person name="Taylor M.S."/>
            <person name="Tegner J."/>
            <person name="Teichmann S.A."/>
            <person name="Ueda H.R."/>
            <person name="van Nimwegen E."/>
            <person name="Verardo R."/>
            <person name="Wei C.L."/>
            <person name="Yagi K."/>
            <person name="Yamanishi H."/>
            <person name="Zabarovsky E."/>
            <person name="Zhu S."/>
            <person name="Zimmer A."/>
            <person name="Hide W."/>
            <person name="Bult C."/>
            <person name="Grimmond S.M."/>
            <person name="Teasdale R.D."/>
            <person name="Liu E.T."/>
            <person name="Brusic V."/>
            <person name="Quackenbush J."/>
            <person name="Wahlestedt C."/>
            <person name="Mattick J.S."/>
            <person name="Hume D.A."/>
            <person name="Kai C."/>
            <person name="Sasaki D."/>
            <person name="Tomaru Y."/>
            <person name="Fukuda S."/>
            <person name="Kanamori-Katayama M."/>
            <person name="Suzuki M."/>
            <person name="Aoki J."/>
            <person name="Arakawa T."/>
            <person name="Iida J."/>
            <person name="Imamura K."/>
            <person name="Itoh M."/>
            <person name="Kato T."/>
            <person name="Kawaji H."/>
            <person name="Kawagashira N."/>
            <person name="Kawashima T."/>
            <person name="Kojima M."/>
            <person name="Kondo S."/>
            <person name="Konno H."/>
            <person name="Nakano K."/>
            <person name="Ninomiya N."/>
            <person name="Nishio T."/>
            <person name="Okada M."/>
            <person name="Plessy C."/>
            <person name="Shibata K."/>
            <person name="Shiraki T."/>
            <person name="Suzuki S."/>
            <person name="Tagami M."/>
            <person name="Waki K."/>
            <person name="Watahiki A."/>
            <person name="Okamura-Oho Y."/>
            <person name="Suzuki H."/>
            <person name="Kawai J."/>
            <person name="Hayashizaki Y."/>
        </authorList>
    </citation>
    <scope>NUCLEOTIDE SEQUENCE [LARGE SCALE MRNA]</scope>
    <source>
        <strain>C57BL/6J</strain>
        <tissue>Bone marrow</tissue>
        <tissue>Cerebellum</tissue>
        <tissue>Spleen</tissue>
        <tissue>Sympathetic ganglion</tissue>
    </source>
</reference>
<reference key="6">
    <citation type="journal article" date="2004" name="J. Biol. Chem.">
        <title>Stomatin modulates gating of acid-sensing ion channels.</title>
        <authorList>
            <person name="Price M.P."/>
            <person name="Thompson R.J."/>
            <person name="Eshcol J.O."/>
            <person name="Wemmie J.A."/>
            <person name="Benson C.J."/>
        </authorList>
    </citation>
    <scope>FUNCTION</scope>
    <scope>INTERACTION WITH ASIC1; ASIC2 AND ASIC3</scope>
</reference>
<reference key="7">
    <citation type="journal article" date="2009" name="Immunity">
        <title>The phagosomal proteome in interferon-gamma-activated macrophages.</title>
        <authorList>
            <person name="Trost M."/>
            <person name="English L."/>
            <person name="Lemieux S."/>
            <person name="Courcelles M."/>
            <person name="Desjardins M."/>
            <person name="Thibault P."/>
        </authorList>
    </citation>
    <scope>PHOSPHORYLATION [LARGE SCALE ANALYSIS] AT SER-161 AND SER-244</scope>
    <scope>IDENTIFICATION BY MASS SPECTROMETRY [LARGE SCALE ANALYSIS]</scope>
</reference>
<reference key="8">
    <citation type="journal article" date="2010" name="Cell">
        <title>A tissue-specific atlas of mouse protein phosphorylation and expression.</title>
        <authorList>
            <person name="Huttlin E.L."/>
            <person name="Jedrychowski M.P."/>
            <person name="Elias J.E."/>
            <person name="Goswami T."/>
            <person name="Rad R."/>
            <person name="Beausoleil S.A."/>
            <person name="Villen J."/>
            <person name="Haas W."/>
            <person name="Sowa M.E."/>
            <person name="Gygi S.P."/>
        </authorList>
    </citation>
    <scope>PHOSPHORYLATION [LARGE SCALE ANALYSIS] AT SER-161</scope>
    <scope>IDENTIFICATION BY MASS SPECTROMETRY [LARGE SCALE ANALYSIS]</scope>
    <source>
        <tissue>Brown adipose tissue</tissue>
        <tissue>Heart</tissue>
        <tissue>Kidney</tissue>
        <tissue>Liver</tissue>
        <tissue>Lung</tissue>
        <tissue>Spleen</tissue>
        <tissue>Testis</tissue>
    </source>
</reference>
<reference key="9">
    <citation type="journal article" date="2012" name="EMBO J.">
        <title>A stomatin dimer modulates the activity of acid-sensing ion channels.</title>
        <authorList>
            <person name="Brand J."/>
            <person name="Smith E.S."/>
            <person name="Schwefel D."/>
            <person name="Lapatsina L."/>
            <person name="Poole K."/>
            <person name="Omerbasic D."/>
            <person name="Kozlenkov A."/>
            <person name="Behlke J."/>
            <person name="Lewin G.R."/>
            <person name="Daumke O."/>
        </authorList>
    </citation>
    <scope>X-RAY CRYSTALLOGRAPHY (1.80 ANGSTROMS) OF 86-213</scope>
    <scope>FUNCTION</scope>
    <scope>SUBUNIT</scope>
    <scope>INTERACTION WITH ASIC3</scope>
    <scope>SUBCELLULAR LOCATION</scope>
    <scope>MUTAGENESIS OF ARG-97; LEU-109; LEU-145; THR-182 AND VAL-197</scope>
</reference>
<protein>
    <recommendedName>
        <fullName evidence="11">Stomatin</fullName>
    </recommendedName>
    <alternativeName>
        <fullName evidence="9">Erythrocyte band 7 integral membrane protein</fullName>
    </alternativeName>
    <alternativeName>
        <fullName evidence="2">Erythrocyte membrane protein band 7.2</fullName>
    </alternativeName>
    <alternativeName>
        <fullName evidence="8">Protein 7.2b</fullName>
    </alternativeName>
</protein>
<accession>P54116</accession>
<accession>O88988</accession>
<accession>Q3UP81</accession>
<accession>Q60744</accession>
<accession>Q62455</accession>
<gene>
    <name evidence="11" type="primary">Stom</name>
    <name evidence="11" type="synonym">Epb7.2</name>
    <name evidence="11" type="synonym">Epb72</name>
</gene>
<evidence type="ECO:0000250" key="1"/>
<evidence type="ECO:0000250" key="2">
    <source>
        <dbReference type="UniProtKB" id="P27105"/>
    </source>
</evidence>
<evidence type="ECO:0000255" key="3"/>
<evidence type="ECO:0000269" key="4">
    <source>
    </source>
</evidence>
<evidence type="ECO:0000269" key="5">
    <source>
    </source>
</evidence>
<evidence type="ECO:0000269" key="6">
    <source>
    </source>
</evidence>
<evidence type="ECO:0000269" key="7">
    <source>
    </source>
</evidence>
<evidence type="ECO:0000303" key="8">
    <source>
    </source>
</evidence>
<evidence type="ECO:0000303" key="9">
    <source>
    </source>
</evidence>
<evidence type="ECO:0000305" key="10"/>
<evidence type="ECO:0000312" key="11">
    <source>
        <dbReference type="MGI" id="MGI:95403"/>
    </source>
</evidence>
<evidence type="ECO:0007744" key="12">
    <source>
    </source>
</evidence>
<evidence type="ECO:0007744" key="13">
    <source>
    </source>
</evidence>
<evidence type="ECO:0007829" key="14">
    <source>
        <dbReference type="PDB" id="4FVG"/>
    </source>
</evidence>
<proteinExistence type="evidence at protein level"/>
<name>STOM_MOUSE</name>
<dbReference type="EMBL" id="U17297">
    <property type="protein sequence ID" value="AAA75024.1"/>
    <property type="molecule type" value="mRNA"/>
</dbReference>
<dbReference type="EMBL" id="X91043">
    <property type="protein sequence ID" value="CAA62503.1"/>
    <property type="molecule type" value="mRNA"/>
</dbReference>
<dbReference type="EMBL" id="U50999">
    <property type="protein sequence ID" value="AAB18857.1"/>
    <property type="status" value="ALT_SEQ"/>
    <property type="molecule type" value="Genomic_DNA"/>
</dbReference>
<dbReference type="EMBL" id="U50993">
    <property type="protein sequence ID" value="AAB18857.1"/>
    <property type="status" value="JOINED"/>
    <property type="molecule type" value="Genomic_DNA"/>
</dbReference>
<dbReference type="EMBL" id="U50994">
    <property type="protein sequence ID" value="AAB18857.1"/>
    <property type="status" value="JOINED"/>
    <property type="molecule type" value="Genomic_DNA"/>
</dbReference>
<dbReference type="EMBL" id="U50995">
    <property type="protein sequence ID" value="AAB18857.1"/>
    <property type="status" value="JOINED"/>
    <property type="molecule type" value="Genomic_DNA"/>
</dbReference>
<dbReference type="EMBL" id="U50996">
    <property type="protein sequence ID" value="AAB18857.1"/>
    <property type="status" value="JOINED"/>
    <property type="molecule type" value="Genomic_DNA"/>
</dbReference>
<dbReference type="EMBL" id="U50997">
    <property type="protein sequence ID" value="AAB18857.1"/>
    <property type="status" value="JOINED"/>
    <property type="molecule type" value="Genomic_DNA"/>
</dbReference>
<dbReference type="EMBL" id="U50998">
    <property type="protein sequence ID" value="AAB18857.1"/>
    <property type="status" value="JOINED"/>
    <property type="molecule type" value="Genomic_DNA"/>
</dbReference>
<dbReference type="EMBL" id="AF093620">
    <property type="protein sequence ID" value="AAC64173.1"/>
    <property type="molecule type" value="mRNA"/>
</dbReference>
<dbReference type="EMBL" id="AK139242">
    <property type="protein sequence ID" value="BAE23930.1"/>
    <property type="molecule type" value="mRNA"/>
</dbReference>
<dbReference type="EMBL" id="AK143724">
    <property type="protein sequence ID" value="BAE25516.1"/>
    <property type="molecule type" value="mRNA"/>
</dbReference>
<dbReference type="EMBL" id="AK148975">
    <property type="protein sequence ID" value="BAE28708.1"/>
    <property type="molecule type" value="mRNA"/>
</dbReference>
<dbReference type="EMBL" id="AK149689">
    <property type="protein sequence ID" value="BAE29028.1"/>
    <property type="molecule type" value="mRNA"/>
</dbReference>
<dbReference type="EMBL" id="AK149821">
    <property type="protein sequence ID" value="BAE29103.1"/>
    <property type="molecule type" value="mRNA"/>
</dbReference>
<dbReference type="EMBL" id="AK149991">
    <property type="protein sequence ID" value="BAE29219.1"/>
    <property type="molecule type" value="mRNA"/>
</dbReference>
<dbReference type="EMBL" id="AK151129">
    <property type="protein sequence ID" value="BAE30137.1"/>
    <property type="molecule type" value="mRNA"/>
</dbReference>
<dbReference type="CCDS" id="CCDS15961.1"/>
<dbReference type="PIR" id="JC5221">
    <property type="entry name" value="JC5221"/>
</dbReference>
<dbReference type="RefSeq" id="NP_038543.1">
    <property type="nucleotide sequence ID" value="NM_013515.2"/>
</dbReference>
<dbReference type="PDB" id="4FVF">
    <property type="method" value="X-ray"/>
    <property type="resolution" value="2.46 A"/>
    <property type="chains" value="A/B=86-213"/>
</dbReference>
<dbReference type="PDB" id="4FVG">
    <property type="method" value="X-ray"/>
    <property type="resolution" value="1.80 A"/>
    <property type="chains" value="A=86-213"/>
</dbReference>
<dbReference type="PDB" id="4FVJ">
    <property type="method" value="X-ray"/>
    <property type="resolution" value="2.69 A"/>
    <property type="chains" value="A/B/C/D/E/F/G/H=86-213"/>
</dbReference>
<dbReference type="PDBsum" id="4FVF"/>
<dbReference type="PDBsum" id="4FVG"/>
<dbReference type="PDBsum" id="4FVJ"/>
<dbReference type="SMR" id="P54116"/>
<dbReference type="BioGRID" id="199465">
    <property type="interactions" value="9"/>
</dbReference>
<dbReference type="FunCoup" id="P54116">
    <property type="interactions" value="811"/>
</dbReference>
<dbReference type="IntAct" id="P54116">
    <property type="interactions" value="5"/>
</dbReference>
<dbReference type="MINT" id="P54116"/>
<dbReference type="STRING" id="10090.ENSMUSP00000028241"/>
<dbReference type="GlyGen" id="P54116">
    <property type="glycosylation" value="2 sites, 1 N-linked glycan (1 site), 1 O-linked glycan (1 site)"/>
</dbReference>
<dbReference type="iPTMnet" id="P54116"/>
<dbReference type="PhosphoSitePlus" id="P54116"/>
<dbReference type="SwissPalm" id="P54116"/>
<dbReference type="jPOST" id="P54116"/>
<dbReference type="PaxDb" id="10090-ENSMUSP00000028241"/>
<dbReference type="PeptideAtlas" id="P54116"/>
<dbReference type="ProteomicsDB" id="257458"/>
<dbReference type="Pumba" id="P54116"/>
<dbReference type="Antibodypedia" id="2509">
    <property type="antibodies" value="262 antibodies from 33 providers"/>
</dbReference>
<dbReference type="DNASU" id="13830"/>
<dbReference type="Ensembl" id="ENSMUST00000028241.7">
    <property type="protein sequence ID" value="ENSMUSP00000028241.7"/>
    <property type="gene ID" value="ENSMUSG00000026880.12"/>
</dbReference>
<dbReference type="GeneID" id="13830"/>
<dbReference type="KEGG" id="mmu:13830"/>
<dbReference type="UCSC" id="uc008jkh.1">
    <property type="organism name" value="mouse"/>
</dbReference>
<dbReference type="AGR" id="MGI:95403"/>
<dbReference type="CTD" id="2040"/>
<dbReference type="MGI" id="MGI:95403">
    <property type="gene designation" value="Stom"/>
</dbReference>
<dbReference type="VEuPathDB" id="HostDB:ENSMUSG00000026880"/>
<dbReference type="eggNOG" id="KOG2621">
    <property type="taxonomic scope" value="Eukaryota"/>
</dbReference>
<dbReference type="GeneTree" id="ENSGT01030000234614"/>
<dbReference type="HOGENOM" id="CLU_024949_3_0_1"/>
<dbReference type="InParanoid" id="P54116"/>
<dbReference type="OMA" id="MFQVTDP"/>
<dbReference type="OrthoDB" id="2105077at2759"/>
<dbReference type="PhylomeDB" id="P54116"/>
<dbReference type="TreeFam" id="TF105750"/>
<dbReference type="Reactome" id="R-MMU-2672351">
    <property type="pathway name" value="Stimuli-sensing channels"/>
</dbReference>
<dbReference type="Reactome" id="R-MMU-6798695">
    <property type="pathway name" value="Neutrophil degranulation"/>
</dbReference>
<dbReference type="Reactome" id="R-MMU-8980692">
    <property type="pathway name" value="RHOA GTPase cycle"/>
</dbReference>
<dbReference type="Reactome" id="R-MMU-9013026">
    <property type="pathway name" value="RHOB GTPase cycle"/>
</dbReference>
<dbReference type="Reactome" id="R-MMU-9013106">
    <property type="pathway name" value="RHOC GTPase cycle"/>
</dbReference>
<dbReference type="Reactome" id="R-MMU-9013406">
    <property type="pathway name" value="RHOQ GTPase cycle"/>
</dbReference>
<dbReference type="Reactome" id="R-MMU-9013407">
    <property type="pathway name" value="RHOH GTPase cycle"/>
</dbReference>
<dbReference type="BioGRID-ORCS" id="13830">
    <property type="hits" value="1 hit in 78 CRISPR screens"/>
</dbReference>
<dbReference type="ChiTaRS" id="Stom">
    <property type="organism name" value="mouse"/>
</dbReference>
<dbReference type="EvolutionaryTrace" id="P54116"/>
<dbReference type="PRO" id="PR:P54116"/>
<dbReference type="Proteomes" id="UP000000589">
    <property type="component" value="Chromosome 2"/>
</dbReference>
<dbReference type="RNAct" id="P54116">
    <property type="molecule type" value="protein"/>
</dbReference>
<dbReference type="Bgee" id="ENSMUSG00000026880">
    <property type="expression patterns" value="Expressed in olfactory epithelium and 257 other cell types or tissues"/>
</dbReference>
<dbReference type="GO" id="GO:0005737">
    <property type="term" value="C:cytoplasm"/>
    <property type="evidence" value="ECO:0000314"/>
    <property type="project" value="AgBase"/>
</dbReference>
<dbReference type="GO" id="GO:0005856">
    <property type="term" value="C:cytoskeleton"/>
    <property type="evidence" value="ECO:0000250"/>
    <property type="project" value="UniProtKB"/>
</dbReference>
<dbReference type="GO" id="GO:0005829">
    <property type="term" value="C:cytosol"/>
    <property type="evidence" value="ECO:0007669"/>
    <property type="project" value="Ensembl"/>
</dbReference>
<dbReference type="GO" id="GO:0005783">
    <property type="term" value="C:endoplasmic reticulum"/>
    <property type="evidence" value="ECO:0007669"/>
    <property type="project" value="Ensembl"/>
</dbReference>
<dbReference type="GO" id="GO:0042470">
    <property type="term" value="C:melanosome"/>
    <property type="evidence" value="ECO:0007669"/>
    <property type="project" value="UniProtKB-SubCell"/>
</dbReference>
<dbReference type="GO" id="GO:0045121">
    <property type="term" value="C:membrane raft"/>
    <property type="evidence" value="ECO:0000250"/>
    <property type="project" value="UniProtKB"/>
</dbReference>
<dbReference type="GO" id="GO:0005739">
    <property type="term" value="C:mitochondrion"/>
    <property type="evidence" value="ECO:0000314"/>
    <property type="project" value="AgBase"/>
</dbReference>
<dbReference type="GO" id="GO:0048471">
    <property type="term" value="C:perinuclear region of cytoplasm"/>
    <property type="evidence" value="ECO:0000314"/>
    <property type="project" value="AgBase"/>
</dbReference>
<dbReference type="GO" id="GO:0005886">
    <property type="term" value="C:plasma membrane"/>
    <property type="evidence" value="ECO:0000314"/>
    <property type="project" value="UniProtKB"/>
</dbReference>
<dbReference type="GO" id="GO:0042802">
    <property type="term" value="F:identical protein binding"/>
    <property type="evidence" value="ECO:0000353"/>
    <property type="project" value="IntAct"/>
</dbReference>
<dbReference type="GO" id="GO:0008200">
    <property type="term" value="F:ion channel inhibitor activity"/>
    <property type="evidence" value="ECO:0000314"/>
    <property type="project" value="UniProtKB"/>
</dbReference>
<dbReference type="GO" id="GO:0042803">
    <property type="term" value="F:protein homodimerization activity"/>
    <property type="evidence" value="ECO:0000353"/>
    <property type="project" value="UniProtKB"/>
</dbReference>
<dbReference type="GO" id="GO:0070063">
    <property type="term" value="F:RNA polymerase binding"/>
    <property type="evidence" value="ECO:0007669"/>
    <property type="project" value="Ensembl"/>
</dbReference>
<dbReference type="GO" id="GO:0044829">
    <property type="term" value="P:positive regulation by host of viral genome replication"/>
    <property type="evidence" value="ECO:0000315"/>
    <property type="project" value="AgBase"/>
</dbReference>
<dbReference type="GO" id="GO:0090314">
    <property type="term" value="P:positive regulation of protein targeting to membrane"/>
    <property type="evidence" value="ECO:0000315"/>
    <property type="project" value="AgBase"/>
</dbReference>
<dbReference type="GO" id="GO:0048524">
    <property type="term" value="P:positive regulation of viral process"/>
    <property type="evidence" value="ECO:0000315"/>
    <property type="project" value="AgBase"/>
</dbReference>
<dbReference type="GO" id="GO:0034765">
    <property type="term" value="P:regulation of monoatomic ion transmembrane transport"/>
    <property type="evidence" value="ECO:0000314"/>
    <property type="project" value="UniProtKB"/>
</dbReference>
<dbReference type="CDD" id="cd03403">
    <property type="entry name" value="SPFH_stomatin"/>
    <property type="match status" value="1"/>
</dbReference>
<dbReference type="FunFam" id="3.30.479.30:FF:000002">
    <property type="entry name" value="band 7 protein AGAP004871"/>
    <property type="match status" value="1"/>
</dbReference>
<dbReference type="Gene3D" id="6.10.250.2090">
    <property type="match status" value="1"/>
</dbReference>
<dbReference type="Gene3D" id="3.30.479.30">
    <property type="entry name" value="Band 7 domain"/>
    <property type="match status" value="1"/>
</dbReference>
<dbReference type="InterPro" id="IPR043202">
    <property type="entry name" value="Band-7_stomatin-like"/>
</dbReference>
<dbReference type="InterPro" id="IPR001107">
    <property type="entry name" value="Band_7"/>
</dbReference>
<dbReference type="InterPro" id="IPR036013">
    <property type="entry name" value="Band_7/SPFH_dom_sf"/>
</dbReference>
<dbReference type="InterPro" id="IPR018080">
    <property type="entry name" value="Band_7/stomatin-like_CS"/>
</dbReference>
<dbReference type="InterPro" id="IPR001972">
    <property type="entry name" value="Stomatin_HflK_fam"/>
</dbReference>
<dbReference type="PANTHER" id="PTHR10264">
    <property type="entry name" value="BAND 7 PROTEIN-RELATED"/>
    <property type="match status" value="1"/>
</dbReference>
<dbReference type="PANTHER" id="PTHR10264:SF115">
    <property type="entry name" value="STOMATIN"/>
    <property type="match status" value="1"/>
</dbReference>
<dbReference type="Pfam" id="PF01145">
    <property type="entry name" value="Band_7"/>
    <property type="match status" value="1"/>
</dbReference>
<dbReference type="PRINTS" id="PR00721">
    <property type="entry name" value="STOMATIN"/>
</dbReference>
<dbReference type="SMART" id="SM00244">
    <property type="entry name" value="PHB"/>
    <property type="match status" value="1"/>
</dbReference>
<dbReference type="SUPFAM" id="SSF117892">
    <property type="entry name" value="Band 7/SPFH domain"/>
    <property type="match status" value="1"/>
</dbReference>
<dbReference type="PROSITE" id="PS01270">
    <property type="entry name" value="BAND_7"/>
    <property type="match status" value="1"/>
</dbReference>
<organism>
    <name type="scientific">Mus musculus</name>
    <name type="common">Mouse</name>
    <dbReference type="NCBI Taxonomy" id="10090"/>
    <lineage>
        <taxon>Eukaryota</taxon>
        <taxon>Metazoa</taxon>
        <taxon>Chordata</taxon>
        <taxon>Craniata</taxon>
        <taxon>Vertebrata</taxon>
        <taxon>Euteleostomi</taxon>
        <taxon>Mammalia</taxon>
        <taxon>Eutheria</taxon>
        <taxon>Euarchontoglires</taxon>
        <taxon>Glires</taxon>
        <taxon>Rodentia</taxon>
        <taxon>Myomorpha</taxon>
        <taxon>Muroidea</taxon>
        <taxon>Muridae</taxon>
        <taxon>Murinae</taxon>
        <taxon>Mus</taxon>
        <taxon>Mus</taxon>
    </lineage>
</organism>